<organism>
    <name type="scientific">Corynebacterium jeikeium (strain K411)</name>
    <dbReference type="NCBI Taxonomy" id="306537"/>
    <lineage>
        <taxon>Bacteria</taxon>
        <taxon>Bacillati</taxon>
        <taxon>Actinomycetota</taxon>
        <taxon>Actinomycetes</taxon>
        <taxon>Mycobacteriales</taxon>
        <taxon>Corynebacteriaceae</taxon>
        <taxon>Corynebacterium</taxon>
    </lineage>
</organism>
<sequence>MNRLPPVALVFLGGALGAIIRWTLTVWIPALGDPTRVLGAATPLNIIGGIPLGDIALLVVNVLGALLLGLLVGMIPDSAHPRRTFWGTGVLGGFTSFSSLAAAVDATTDSASTILIGGTYGVFTLALGLIAAAMGLRLGRDLNELARLRRAADGADEPQDPHEPHKGGAR</sequence>
<dbReference type="EMBL" id="CR931997">
    <property type="protein sequence ID" value="CAI38241.1"/>
    <property type="molecule type" value="Genomic_DNA"/>
</dbReference>
<dbReference type="RefSeq" id="WP_005292465.1">
    <property type="nucleotide sequence ID" value="NC_007164.1"/>
</dbReference>
<dbReference type="SMR" id="Q4JSG6"/>
<dbReference type="STRING" id="306537.jk2059"/>
<dbReference type="GeneID" id="92739692"/>
<dbReference type="KEGG" id="cjk:jk2059"/>
<dbReference type="eggNOG" id="ENOG5032CGI">
    <property type="taxonomic scope" value="Bacteria"/>
</dbReference>
<dbReference type="HOGENOM" id="CLU_114342_1_1_11"/>
<dbReference type="OrthoDB" id="4427838at2"/>
<dbReference type="Proteomes" id="UP000000545">
    <property type="component" value="Chromosome"/>
</dbReference>
<dbReference type="GO" id="GO:0005886">
    <property type="term" value="C:plasma membrane"/>
    <property type="evidence" value="ECO:0007669"/>
    <property type="project" value="UniProtKB-SubCell"/>
</dbReference>
<dbReference type="GO" id="GO:0062054">
    <property type="term" value="F:fluoride channel activity"/>
    <property type="evidence" value="ECO:0007669"/>
    <property type="project" value="UniProtKB-UniRule"/>
</dbReference>
<dbReference type="GO" id="GO:0046872">
    <property type="term" value="F:metal ion binding"/>
    <property type="evidence" value="ECO:0007669"/>
    <property type="project" value="UniProtKB-KW"/>
</dbReference>
<dbReference type="GO" id="GO:0140114">
    <property type="term" value="P:cellular detoxification of fluoride"/>
    <property type="evidence" value="ECO:0007669"/>
    <property type="project" value="UniProtKB-UniRule"/>
</dbReference>
<dbReference type="HAMAP" id="MF_00454">
    <property type="entry name" value="FluC"/>
    <property type="match status" value="1"/>
</dbReference>
<dbReference type="InterPro" id="IPR003691">
    <property type="entry name" value="FluC"/>
</dbReference>
<dbReference type="Pfam" id="PF02537">
    <property type="entry name" value="CRCB"/>
    <property type="match status" value="1"/>
</dbReference>
<protein>
    <recommendedName>
        <fullName evidence="1">Fluoride-specific ion channel FluC 2</fullName>
    </recommendedName>
</protein>
<evidence type="ECO:0000255" key="1">
    <source>
        <dbReference type="HAMAP-Rule" id="MF_00454"/>
    </source>
</evidence>
<accession>Q4JSG6</accession>
<keyword id="KW-1003">Cell membrane</keyword>
<keyword id="KW-0407">Ion channel</keyword>
<keyword id="KW-0406">Ion transport</keyword>
<keyword id="KW-0472">Membrane</keyword>
<keyword id="KW-0479">Metal-binding</keyword>
<keyword id="KW-1185">Reference proteome</keyword>
<keyword id="KW-0915">Sodium</keyword>
<keyword id="KW-0812">Transmembrane</keyword>
<keyword id="KW-1133">Transmembrane helix</keyword>
<keyword id="KW-0813">Transport</keyword>
<comment type="function">
    <text evidence="1">Fluoride-specific ion channel. Important for reducing fluoride concentration in the cell, thus reducing its toxicity.</text>
</comment>
<comment type="catalytic activity">
    <reaction evidence="1">
        <text>fluoride(in) = fluoride(out)</text>
        <dbReference type="Rhea" id="RHEA:76159"/>
        <dbReference type="ChEBI" id="CHEBI:17051"/>
    </reaction>
    <physiologicalReaction direction="left-to-right" evidence="1">
        <dbReference type="Rhea" id="RHEA:76160"/>
    </physiologicalReaction>
</comment>
<comment type="activity regulation">
    <text evidence="1">Na(+) is not transported, but it plays an essential structural role and its presence is essential for fluoride channel function.</text>
</comment>
<comment type="subcellular location">
    <subcellularLocation>
        <location evidence="1">Cell membrane</location>
        <topology evidence="1">Multi-pass membrane protein</topology>
    </subcellularLocation>
</comment>
<comment type="similarity">
    <text evidence="1">Belongs to the fluoride channel Fluc/FEX (TC 1.A.43) family.</text>
</comment>
<name>FLUC2_CORJK</name>
<proteinExistence type="inferred from homology"/>
<gene>
    <name evidence="1" type="primary">fluC2</name>
    <name evidence="1" type="synonym">crcB2</name>
    <name type="ordered locus">jk2059</name>
</gene>
<reference key="1">
    <citation type="journal article" date="2005" name="J. Bacteriol.">
        <title>Complete genome sequence and analysis of the multiresistant nosocomial pathogen Corynebacterium jeikeium K411, a lipid-requiring bacterium of the human skin flora.</title>
        <authorList>
            <person name="Tauch A."/>
            <person name="Kaiser O."/>
            <person name="Hain T."/>
            <person name="Goesmann A."/>
            <person name="Weisshaar B."/>
            <person name="Albersmeier A."/>
            <person name="Bekel T."/>
            <person name="Bischoff N."/>
            <person name="Brune I."/>
            <person name="Chakraborty T."/>
            <person name="Kalinowski J."/>
            <person name="Meyer F."/>
            <person name="Rupp O."/>
            <person name="Schneiker S."/>
            <person name="Viehoever P."/>
            <person name="Puehler A."/>
        </authorList>
    </citation>
    <scope>NUCLEOTIDE SEQUENCE [LARGE SCALE GENOMIC DNA]</scope>
    <source>
        <strain>K411</strain>
    </source>
</reference>
<feature type="chain" id="PRO_0000252871" description="Fluoride-specific ion channel FluC 2">
    <location>
        <begin position="1"/>
        <end position="170"/>
    </location>
</feature>
<feature type="transmembrane region" description="Helical" evidence="1">
    <location>
        <begin position="8"/>
        <end position="28"/>
    </location>
</feature>
<feature type="transmembrane region" description="Helical" evidence="1">
    <location>
        <begin position="55"/>
        <end position="75"/>
    </location>
</feature>
<feature type="transmembrane region" description="Helical" evidence="1">
    <location>
        <begin position="84"/>
        <end position="104"/>
    </location>
</feature>
<feature type="transmembrane region" description="Helical" evidence="1">
    <location>
        <begin position="114"/>
        <end position="134"/>
    </location>
</feature>
<feature type="binding site" evidence="1">
    <location>
        <position position="92"/>
    </location>
    <ligand>
        <name>Na(+)</name>
        <dbReference type="ChEBI" id="CHEBI:29101"/>
        <note>structural</note>
    </ligand>
</feature>
<feature type="binding site" evidence="1">
    <location>
        <position position="95"/>
    </location>
    <ligand>
        <name>Na(+)</name>
        <dbReference type="ChEBI" id="CHEBI:29101"/>
        <note>structural</note>
    </ligand>
</feature>